<reference key="1">
    <citation type="journal article" date="1998" name="Nature">
        <title>Deciphering the biology of Mycobacterium tuberculosis from the complete genome sequence.</title>
        <authorList>
            <person name="Cole S.T."/>
            <person name="Brosch R."/>
            <person name="Parkhill J."/>
            <person name="Garnier T."/>
            <person name="Churcher C.M."/>
            <person name="Harris D.E."/>
            <person name="Gordon S.V."/>
            <person name="Eiglmeier K."/>
            <person name="Gas S."/>
            <person name="Barry C.E. III"/>
            <person name="Tekaia F."/>
            <person name="Badcock K."/>
            <person name="Basham D."/>
            <person name="Brown D."/>
            <person name="Chillingworth T."/>
            <person name="Connor R."/>
            <person name="Davies R.M."/>
            <person name="Devlin K."/>
            <person name="Feltwell T."/>
            <person name="Gentles S."/>
            <person name="Hamlin N."/>
            <person name="Holroyd S."/>
            <person name="Hornsby T."/>
            <person name="Jagels K."/>
            <person name="Krogh A."/>
            <person name="McLean J."/>
            <person name="Moule S."/>
            <person name="Murphy L.D."/>
            <person name="Oliver S."/>
            <person name="Osborne J."/>
            <person name="Quail M.A."/>
            <person name="Rajandream M.A."/>
            <person name="Rogers J."/>
            <person name="Rutter S."/>
            <person name="Seeger K."/>
            <person name="Skelton S."/>
            <person name="Squares S."/>
            <person name="Squares R."/>
            <person name="Sulston J.E."/>
            <person name="Taylor K."/>
            <person name="Whitehead S."/>
            <person name="Barrell B.G."/>
        </authorList>
    </citation>
    <scope>NUCLEOTIDE SEQUENCE [LARGE SCALE GENOMIC DNA]</scope>
    <source>
        <strain>ATCC 25618 / H37Rv</strain>
    </source>
</reference>
<reference key="2">
    <citation type="journal article" date="2001" name="Proc. Natl. Acad. Sci. U.S.A.">
        <title>Regulation of the Mycobacterium tuberculosis hypoxic response gene encoding alpha -crystallin.</title>
        <authorList>
            <person name="Sherman D.R."/>
            <person name="Voskuil M."/>
            <person name="Schnappinger D."/>
            <person name="Liao R."/>
            <person name="Harrell M.I."/>
            <person name="Schoolnik G.K."/>
        </authorList>
    </citation>
    <scope>INDUCTION BY HYPOXIA</scope>
    <source>
        <strain>ATCC 25618 / H37Rv</strain>
    </source>
</reference>
<reference key="3">
    <citation type="journal article" date="2011" name="Mol. Cell. Proteomics">
        <title>Proteogenomic analysis of Mycobacterium tuberculosis by high resolution mass spectrometry.</title>
        <authorList>
            <person name="Kelkar D.S."/>
            <person name="Kumar D."/>
            <person name="Kumar P."/>
            <person name="Balakrishnan L."/>
            <person name="Muthusamy B."/>
            <person name="Yadav A.K."/>
            <person name="Shrivastava P."/>
            <person name="Marimuthu A."/>
            <person name="Anand S."/>
            <person name="Sundaram H."/>
            <person name="Kingsbury R."/>
            <person name="Harsha H.C."/>
            <person name="Nair B."/>
            <person name="Prasad T.S."/>
            <person name="Chauhan D.S."/>
            <person name="Katoch K."/>
            <person name="Katoch V.M."/>
            <person name="Kumar P."/>
            <person name="Chaerkady R."/>
            <person name="Ramachandran S."/>
            <person name="Dash D."/>
            <person name="Pandey A."/>
        </authorList>
    </citation>
    <scope>IDENTIFICATION BY MASS SPECTROMETRY [LARGE SCALE ANALYSIS]</scope>
    <source>
        <strain>ATCC 25618 / H37Rv</strain>
    </source>
</reference>
<accession>P9WMB3</accession>
<accession>L0TD68</accession>
<accession>P71956</accession>
<accession>Q7D6T7</accession>
<gene>
    <name type="ordered locus">Rv2659c</name>
</gene>
<evidence type="ECO:0000250" key="1"/>
<evidence type="ECO:0000255" key="2">
    <source>
        <dbReference type="PROSITE-ProRule" id="PRU01246"/>
    </source>
</evidence>
<evidence type="ECO:0000255" key="3">
    <source>
        <dbReference type="PROSITE-ProRule" id="PRU01248"/>
    </source>
</evidence>
<evidence type="ECO:0000269" key="4">
    <source>
    </source>
</evidence>
<evidence type="ECO:0000305" key="5"/>
<dbReference type="EMBL" id="AL123456">
    <property type="protein sequence ID" value="CCP45457.1"/>
    <property type="molecule type" value="Genomic_DNA"/>
</dbReference>
<dbReference type="PIR" id="G70966">
    <property type="entry name" value="G70966"/>
</dbReference>
<dbReference type="RefSeq" id="NP_217175.1">
    <property type="nucleotide sequence ID" value="NC_000962.3"/>
</dbReference>
<dbReference type="RefSeq" id="WP_003899420.1">
    <property type="nucleotide sequence ID" value="NZ_NVQJ01000079.1"/>
</dbReference>
<dbReference type="SMR" id="P9WMB3"/>
<dbReference type="STRING" id="83332.Rv2659c"/>
<dbReference type="PaxDb" id="83332-Rv2659c"/>
<dbReference type="DNASU" id="885098"/>
<dbReference type="GeneID" id="885098"/>
<dbReference type="KEGG" id="mtu:Rv2659c"/>
<dbReference type="KEGG" id="mtv:RVBD_2659c"/>
<dbReference type="TubercuList" id="Rv2659c"/>
<dbReference type="eggNOG" id="COG0582">
    <property type="taxonomic scope" value="Bacteria"/>
</dbReference>
<dbReference type="InParanoid" id="P9WMB3"/>
<dbReference type="OrthoDB" id="1822491at2"/>
<dbReference type="PhylomeDB" id="P9WMB3"/>
<dbReference type="Proteomes" id="UP000001584">
    <property type="component" value="Chromosome"/>
</dbReference>
<dbReference type="GO" id="GO:0003677">
    <property type="term" value="F:DNA binding"/>
    <property type="evidence" value="ECO:0007669"/>
    <property type="project" value="UniProtKB-KW"/>
</dbReference>
<dbReference type="GO" id="GO:0009009">
    <property type="term" value="F:site-specific recombinase activity"/>
    <property type="evidence" value="ECO:0000318"/>
    <property type="project" value="GO_Central"/>
</dbReference>
<dbReference type="GO" id="GO:0007059">
    <property type="term" value="P:chromosome segregation"/>
    <property type="evidence" value="ECO:0000318"/>
    <property type="project" value="GO_Central"/>
</dbReference>
<dbReference type="GO" id="GO:0006310">
    <property type="term" value="P:DNA recombination"/>
    <property type="evidence" value="ECO:0000318"/>
    <property type="project" value="GO_Central"/>
</dbReference>
<dbReference type="GO" id="GO:0075713">
    <property type="term" value="P:establishment of integrated proviral latency"/>
    <property type="evidence" value="ECO:0007669"/>
    <property type="project" value="UniProtKB-KW"/>
</dbReference>
<dbReference type="GO" id="GO:0046718">
    <property type="term" value="P:symbiont entry into host cell"/>
    <property type="evidence" value="ECO:0007669"/>
    <property type="project" value="UniProtKB-KW"/>
</dbReference>
<dbReference type="GO" id="GO:0044826">
    <property type="term" value="P:viral genome integration into host DNA"/>
    <property type="evidence" value="ECO:0007669"/>
    <property type="project" value="UniProtKB-KW"/>
</dbReference>
<dbReference type="CDD" id="cd01189">
    <property type="entry name" value="INT_ICEBs1_C_like"/>
    <property type="match status" value="1"/>
</dbReference>
<dbReference type="Gene3D" id="1.10.150.130">
    <property type="match status" value="1"/>
</dbReference>
<dbReference type="Gene3D" id="1.10.443.10">
    <property type="entry name" value="Intergrase catalytic core"/>
    <property type="match status" value="1"/>
</dbReference>
<dbReference type="InterPro" id="IPR044068">
    <property type="entry name" value="CB"/>
</dbReference>
<dbReference type="InterPro" id="IPR011010">
    <property type="entry name" value="DNA_brk_join_enz"/>
</dbReference>
<dbReference type="InterPro" id="IPR013762">
    <property type="entry name" value="Integrase-like_cat_sf"/>
</dbReference>
<dbReference type="InterPro" id="IPR002104">
    <property type="entry name" value="Integrase_catalytic"/>
</dbReference>
<dbReference type="InterPro" id="IPR010998">
    <property type="entry name" value="Integrase_recombinase_N"/>
</dbReference>
<dbReference type="InterPro" id="IPR004107">
    <property type="entry name" value="Integrase_SAM-like_N"/>
</dbReference>
<dbReference type="InterPro" id="IPR050090">
    <property type="entry name" value="Tyrosine_recombinase_XerCD"/>
</dbReference>
<dbReference type="PANTHER" id="PTHR30349">
    <property type="entry name" value="PHAGE INTEGRASE-RELATED"/>
    <property type="match status" value="1"/>
</dbReference>
<dbReference type="PANTHER" id="PTHR30349:SF64">
    <property type="entry name" value="PROPHAGE INTEGRASE INTD-RELATED"/>
    <property type="match status" value="1"/>
</dbReference>
<dbReference type="Pfam" id="PF14659">
    <property type="entry name" value="Phage_int_SAM_3"/>
    <property type="match status" value="1"/>
</dbReference>
<dbReference type="Pfam" id="PF00589">
    <property type="entry name" value="Phage_integrase"/>
    <property type="match status" value="1"/>
</dbReference>
<dbReference type="SUPFAM" id="SSF56349">
    <property type="entry name" value="DNA breaking-rejoining enzymes"/>
    <property type="match status" value="1"/>
</dbReference>
<dbReference type="PROSITE" id="PS51900">
    <property type="entry name" value="CB"/>
    <property type="match status" value="1"/>
</dbReference>
<dbReference type="PROSITE" id="PS51898">
    <property type="entry name" value="TYR_RECOMBINASE"/>
    <property type="match status" value="1"/>
</dbReference>
<organism>
    <name type="scientific">Mycobacterium tuberculosis (strain ATCC 25618 / H37Rv)</name>
    <dbReference type="NCBI Taxonomy" id="83332"/>
    <lineage>
        <taxon>Bacteria</taxon>
        <taxon>Bacillati</taxon>
        <taxon>Actinomycetota</taxon>
        <taxon>Actinomycetes</taxon>
        <taxon>Mycobacteriales</taxon>
        <taxon>Mycobacteriaceae</taxon>
        <taxon>Mycobacterium</taxon>
        <taxon>Mycobacterium tuberculosis complex</taxon>
    </lineage>
</organism>
<sequence>MTQTGKRQRRKFGRIRQFNSGRWQASYTGPDGRVYIAPKTFNAKIDAEAWLTDRRREIDRQLWSPASGQEDRPGAPFGEYAEGWLKQRGIKDRTRAHYRKLLDNHILATFADTDLRDITPAAVRRWYATTAVGTPTMRAHSYSLLRAIMQTALADDLIDSNPCRISGASTARRVHKIRPATLDELETITKAMPDPYQAFVLMAAWLAMRYGELTELRRKDIDLHGEVARVRRAVVRVGEGFKVTTPKSDAGVRDISIPPHLIPAIEDHLHKHVNPGRESLLFPSVNDPNRHLAPSALYRMFYKARKAAGRPDLRVHDLRHSGAVLAASTGATLAELMQRLGHSTAGAALRYQHAAKGRDREIAALLSKLAENQEM</sequence>
<keyword id="KW-0229">DNA integration</keyword>
<keyword id="KW-0233">DNA recombination</keyword>
<keyword id="KW-0238">DNA-binding</keyword>
<keyword id="KW-1185">Reference proteome</keyword>
<keyword id="KW-1179">Viral genome integration</keyword>
<keyword id="KW-1160">Virus entry into host cell</keyword>
<comment type="function">
    <text evidence="1">Integrase is necessary for integration of the phage into the host genome by site-specific recombination. In conjunction with excisionase, integrase is also necessary for excision of the prophage from the host genome (By similarity).</text>
</comment>
<comment type="induction">
    <text evidence="4">A possible member of the dormancy regulon. Induced in response to reduced oxygen tension (hypoxia). It is hoped that this regulon will give insight into the latent, or dormant phase of infection.</text>
</comment>
<comment type="similarity">
    <text evidence="5">Belongs to the 'phage' integrase family.</text>
</comment>
<feature type="chain" id="PRO_0000392940" description="Putative prophage phiRv2 integrase">
    <location>
        <begin position="1"/>
        <end position="375"/>
    </location>
</feature>
<feature type="domain" description="Core-binding (CB)" evidence="3">
    <location>
        <begin position="75"/>
        <end position="153"/>
    </location>
</feature>
<feature type="domain" description="Tyr recombinase" evidence="2">
    <location>
        <begin position="175"/>
        <end position="364"/>
    </location>
</feature>
<feature type="active site" evidence="2">
    <location>
        <position position="209"/>
    </location>
</feature>
<feature type="active site" evidence="2">
    <location>
        <position position="316"/>
    </location>
</feature>
<feature type="active site" evidence="2">
    <location>
        <position position="319"/>
    </location>
</feature>
<feature type="active site" evidence="2">
    <location>
        <position position="342"/>
    </location>
</feature>
<feature type="active site" description="O-(3'-phospho-DNA)-tyrosine intermediate" evidence="2">
    <location>
        <position position="351"/>
    </location>
</feature>
<protein>
    <recommendedName>
        <fullName>Putative prophage phiRv2 integrase</fullName>
    </recommendedName>
</protein>
<proteinExistence type="evidence at protein level"/>
<name>INT2_MYCTU</name>